<protein>
    <recommendedName>
        <fullName>G patch domain-containing protein 11</fullName>
    </recommendedName>
    <alternativeName>
        <fullName>Coiled-coil domain-containing protein 75</fullName>
    </alternativeName>
</protein>
<name>GPT11_BOVIN</name>
<sequence length="260" mass="30457">MAEEEDYMSDSFINVQEDIRPGLPMLRQIREARRKEEKRQEANLKNRQKSIKEEEQERRDMGLKNALGCENKGFALLQKMGYKSGQALGKSGDGIVEPIPLNVKTGKSGIGHETLLKRKAEEKLESYRRKIHMKSQAEERAAEQFRIRLKNKQDEMKLEGDLRRSQRACQQLDTQKNIQVPREAWYWLRPEEETEEETEEEKEQDEDEYKSEDLSVLEKLQILTSYLREEHLYCIWCGTAYEDKEDLSSNCPGPTSADHD</sequence>
<feature type="chain" id="PRO_0000279752" description="G patch domain-containing protein 11">
    <location>
        <begin position="1"/>
        <end position="260"/>
    </location>
</feature>
<feature type="domain" description="G-patch" evidence="3">
    <location>
        <begin position="69"/>
        <end position="115"/>
    </location>
</feature>
<feature type="region of interest" description="Disordered" evidence="4">
    <location>
        <begin position="33"/>
        <end position="60"/>
    </location>
</feature>
<feature type="region of interest" description="Disordered" evidence="4">
    <location>
        <begin position="187"/>
        <end position="212"/>
    </location>
</feature>
<feature type="coiled-coil region" evidence="2">
    <location>
        <begin position="25"/>
        <end position="61"/>
    </location>
</feature>
<feature type="compositionally biased region" description="Acidic residues" evidence="4">
    <location>
        <begin position="192"/>
        <end position="210"/>
    </location>
</feature>
<feature type="modified residue" description="N6-acetyllysine" evidence="1">
    <location>
        <position position="123"/>
    </location>
</feature>
<gene>
    <name type="primary">GPATCH11</name>
    <name type="synonym">CCDC75</name>
</gene>
<reference key="1">
    <citation type="submission" date="2006-01" db="EMBL/GenBank/DDBJ databases">
        <authorList>
            <consortium name="NIH - Mammalian Gene Collection (MGC) project"/>
        </authorList>
    </citation>
    <scope>NUCLEOTIDE SEQUENCE [LARGE SCALE MRNA]</scope>
    <source>
        <strain>Hereford</strain>
        <tissue>Heart ventricle</tissue>
    </source>
</reference>
<evidence type="ECO:0000250" key="1">
    <source>
        <dbReference type="UniProtKB" id="Q8N954"/>
    </source>
</evidence>
<evidence type="ECO:0000255" key="2"/>
<evidence type="ECO:0000255" key="3">
    <source>
        <dbReference type="PROSITE-ProRule" id="PRU00092"/>
    </source>
</evidence>
<evidence type="ECO:0000256" key="4">
    <source>
        <dbReference type="SAM" id="MobiDB-lite"/>
    </source>
</evidence>
<evidence type="ECO:0000305" key="5"/>
<organism>
    <name type="scientific">Bos taurus</name>
    <name type="common">Bovine</name>
    <dbReference type="NCBI Taxonomy" id="9913"/>
    <lineage>
        <taxon>Eukaryota</taxon>
        <taxon>Metazoa</taxon>
        <taxon>Chordata</taxon>
        <taxon>Craniata</taxon>
        <taxon>Vertebrata</taxon>
        <taxon>Euteleostomi</taxon>
        <taxon>Mammalia</taxon>
        <taxon>Eutheria</taxon>
        <taxon>Laurasiatheria</taxon>
        <taxon>Artiodactyla</taxon>
        <taxon>Ruminantia</taxon>
        <taxon>Pecora</taxon>
        <taxon>Bovidae</taxon>
        <taxon>Bovinae</taxon>
        <taxon>Bos</taxon>
    </lineage>
</organism>
<comment type="subcellular location">
    <subcellularLocation>
        <location evidence="1">Chromosome</location>
        <location evidence="1">Centromere</location>
        <location evidence="1">Kinetochore</location>
    </subcellularLocation>
</comment>
<comment type="similarity">
    <text evidence="5">Belongs to the GPATCH11 family.</text>
</comment>
<comment type="sequence caution" evidence="5">
    <conflict type="erroneous initiation">
        <sequence resource="EMBL-CDS" id="AAI12803"/>
    </conflict>
    <text>Extended N-terminus.</text>
</comment>
<proteinExistence type="evidence at transcript level"/>
<keyword id="KW-0007">Acetylation</keyword>
<keyword id="KW-0137">Centromere</keyword>
<keyword id="KW-0158">Chromosome</keyword>
<keyword id="KW-0175">Coiled coil</keyword>
<keyword id="KW-0995">Kinetochore</keyword>
<keyword id="KW-1185">Reference proteome</keyword>
<accession>Q2KI19</accession>
<dbReference type="EMBL" id="BC112802">
    <property type="protein sequence ID" value="AAI12803.1"/>
    <property type="status" value="ALT_INIT"/>
    <property type="molecule type" value="mRNA"/>
</dbReference>
<dbReference type="RefSeq" id="NP_001039592.3">
    <property type="nucleotide sequence ID" value="NM_001046127.3"/>
</dbReference>
<dbReference type="FunCoup" id="Q2KI19">
    <property type="interactions" value="1895"/>
</dbReference>
<dbReference type="STRING" id="9913.ENSBTAP00000005037"/>
<dbReference type="PaxDb" id="9913-ENSBTAP00000005037"/>
<dbReference type="GeneID" id="512655"/>
<dbReference type="KEGG" id="bta:512655"/>
<dbReference type="CTD" id="253635"/>
<dbReference type="eggNOG" id="KOG1994">
    <property type="taxonomic scope" value="Eukaryota"/>
</dbReference>
<dbReference type="HOGENOM" id="CLU_046724_3_1_1"/>
<dbReference type="InParanoid" id="Q2KI19"/>
<dbReference type="OrthoDB" id="786951at2759"/>
<dbReference type="TreeFam" id="TF313583"/>
<dbReference type="Proteomes" id="UP000009136">
    <property type="component" value="Unplaced"/>
</dbReference>
<dbReference type="GO" id="GO:0000776">
    <property type="term" value="C:kinetochore"/>
    <property type="evidence" value="ECO:0000250"/>
    <property type="project" value="UniProtKB"/>
</dbReference>
<dbReference type="GO" id="GO:0003676">
    <property type="term" value="F:nucleic acid binding"/>
    <property type="evidence" value="ECO:0007669"/>
    <property type="project" value="InterPro"/>
</dbReference>
<dbReference type="InterPro" id="IPR025239">
    <property type="entry name" value="DUF4187"/>
</dbReference>
<dbReference type="InterPro" id="IPR000467">
    <property type="entry name" value="G_patch_dom"/>
</dbReference>
<dbReference type="InterPro" id="IPR039249">
    <property type="entry name" value="GPATCH11"/>
</dbReference>
<dbReference type="PANTHER" id="PTHR21032">
    <property type="entry name" value="G PATCH DOMAIN-CONTAINING PROTEIN 11"/>
    <property type="match status" value="1"/>
</dbReference>
<dbReference type="PANTHER" id="PTHR21032:SF0">
    <property type="entry name" value="G PATCH DOMAIN-CONTAINING PROTEIN 11"/>
    <property type="match status" value="1"/>
</dbReference>
<dbReference type="Pfam" id="PF13821">
    <property type="entry name" value="DUF4187"/>
    <property type="match status" value="1"/>
</dbReference>
<dbReference type="Pfam" id="PF01585">
    <property type="entry name" value="G-patch"/>
    <property type="match status" value="1"/>
</dbReference>
<dbReference type="SMART" id="SM01173">
    <property type="entry name" value="DUF4187"/>
    <property type="match status" value="1"/>
</dbReference>
<dbReference type="SMART" id="SM00443">
    <property type="entry name" value="G_patch"/>
    <property type="match status" value="1"/>
</dbReference>
<dbReference type="PROSITE" id="PS50174">
    <property type="entry name" value="G_PATCH"/>
    <property type="match status" value="1"/>
</dbReference>